<reference key="1">
    <citation type="journal article" date="1990" name="Biochim. Biophys. Acta">
        <title>The primary structure of rat ribosomal proteins: the amino acid sequences of L27a and L28 and corrections in the sequences of S4 and S12.</title>
        <authorList>
            <person name="Wool I.G."/>
            <person name="Chan Y.-L."/>
            <person name="Paz V."/>
            <person name="Olvera J."/>
        </authorList>
    </citation>
    <scope>NUCLEOTIDE SEQUENCE [MRNA]</scope>
    <scope>PROTEIN SEQUENCE OF 2-16</scope>
    <source>
        <strain>Sprague-Dawley</strain>
        <tissue>Liver</tissue>
    </source>
</reference>
<sequence length="148" mass="16618">MPSRLRKTRKLRGHVSHGHGRIGKHRKHPGGRGNAGGMHHHRINFDKYHPGYFGKVGMRHYHLKRNQSFCPTVNLDKLWTLVSEQTRVNAAKNKNGVAPIIDVVRSGYYKVLGKGKLPKQPVIVKAKFFSRRAEEKIKGVGGACVLVA</sequence>
<proteinExistence type="evidence at protein level"/>
<evidence type="ECO:0000250" key="1">
    <source>
        <dbReference type="UniProtKB" id="P46776"/>
    </source>
</evidence>
<evidence type="ECO:0000256" key="2">
    <source>
        <dbReference type="SAM" id="MobiDB-lite"/>
    </source>
</evidence>
<evidence type="ECO:0000269" key="3">
    <source>
    </source>
</evidence>
<evidence type="ECO:0000305" key="4"/>
<protein>
    <recommendedName>
        <fullName evidence="4">Large ribosomal subunit protein uL15</fullName>
    </recommendedName>
    <alternativeName>
        <fullName>60S ribosomal protein L27a</fullName>
    </alternativeName>
</protein>
<feature type="initiator methionine" description="Removed" evidence="3">
    <location>
        <position position="1"/>
    </location>
</feature>
<feature type="chain" id="PRO_0000104884" description="Large ribosomal subunit protein uL15">
    <location>
        <begin position="2"/>
        <end position="148"/>
    </location>
</feature>
<feature type="region of interest" description="Disordered" evidence="2">
    <location>
        <begin position="1"/>
        <end position="37"/>
    </location>
</feature>
<feature type="compositionally biased region" description="Basic residues" evidence="2">
    <location>
        <begin position="1"/>
        <end position="30"/>
    </location>
</feature>
<feature type="modified residue" description="(3S)-3-hydroxyhistidine" evidence="1">
    <location>
        <position position="39"/>
    </location>
</feature>
<feature type="modified residue" description="N6-acetyllysine" evidence="1">
    <location>
        <position position="47"/>
    </location>
</feature>
<feature type="modified residue" description="N6-acetyllysine" evidence="1">
    <location>
        <position position="55"/>
    </location>
</feature>
<feature type="modified residue" description="Phosphoserine" evidence="1">
    <location>
        <position position="68"/>
    </location>
</feature>
<feature type="modified residue" description="N6-acetyllysine" evidence="1">
    <location>
        <position position="110"/>
    </location>
</feature>
<dbReference type="EMBL" id="X52733">
    <property type="protein sequence ID" value="CAA36947.1"/>
    <property type="molecule type" value="mRNA"/>
</dbReference>
<dbReference type="PIR" id="S13071">
    <property type="entry name" value="R5RTLA"/>
</dbReference>
<dbReference type="RefSeq" id="NP_001099760.1">
    <property type="nucleotide sequence ID" value="NM_001106290.1"/>
</dbReference>
<dbReference type="RefSeq" id="XP_063141882.1">
    <property type="nucleotide sequence ID" value="XM_063285812.1"/>
</dbReference>
<dbReference type="RefSeq" id="XP_063141886.1">
    <property type="nucleotide sequence ID" value="XM_063285816.1"/>
</dbReference>
<dbReference type="PDB" id="7QGG">
    <property type="method" value="EM"/>
    <property type="resolution" value="2.86 A"/>
    <property type="chains" value="b=1-148"/>
</dbReference>
<dbReference type="PDBsum" id="7QGG"/>
<dbReference type="EMDB" id="EMD-13954"/>
<dbReference type="SMR" id="P18445"/>
<dbReference type="BioGRID" id="254258">
    <property type="interactions" value="2"/>
</dbReference>
<dbReference type="FunCoup" id="P18445">
    <property type="interactions" value="2856"/>
</dbReference>
<dbReference type="IntAct" id="P18445">
    <property type="interactions" value="5"/>
</dbReference>
<dbReference type="STRING" id="10116.ENSRNOP00000019247"/>
<dbReference type="iPTMnet" id="P18445"/>
<dbReference type="PhosphoSitePlus" id="P18445"/>
<dbReference type="jPOST" id="P18445"/>
<dbReference type="PaxDb" id="10116-ENSRNOP00000019247"/>
<dbReference type="GeneID" id="293418"/>
<dbReference type="KEGG" id="rno:293418"/>
<dbReference type="UCSC" id="RGD:1309771">
    <property type="organism name" value="rat"/>
</dbReference>
<dbReference type="AGR" id="RGD:1309771"/>
<dbReference type="CTD" id="6157"/>
<dbReference type="RGD" id="1309771">
    <property type="gene designation" value="Rpl27a"/>
</dbReference>
<dbReference type="eggNOG" id="KOG1742">
    <property type="taxonomic scope" value="Eukaryota"/>
</dbReference>
<dbReference type="HOGENOM" id="CLU_109163_1_0_1"/>
<dbReference type="InParanoid" id="P18445"/>
<dbReference type="OrthoDB" id="61900at2759"/>
<dbReference type="PhylomeDB" id="P18445"/>
<dbReference type="TreeFam" id="TF313742"/>
<dbReference type="Reactome" id="R-RNO-156827">
    <property type="pathway name" value="L13a-mediated translational silencing of Ceruloplasmin expression"/>
</dbReference>
<dbReference type="Reactome" id="R-RNO-1799339">
    <property type="pathway name" value="SRP-dependent cotranslational protein targeting to membrane"/>
</dbReference>
<dbReference type="Reactome" id="R-RNO-6791226">
    <property type="pathway name" value="Major pathway of rRNA processing in the nucleolus and cytosol"/>
</dbReference>
<dbReference type="Reactome" id="R-RNO-72689">
    <property type="pathway name" value="Formation of a pool of free 40S subunits"/>
</dbReference>
<dbReference type="Reactome" id="R-RNO-72706">
    <property type="pathway name" value="GTP hydrolysis and joining of the 60S ribosomal subunit"/>
</dbReference>
<dbReference type="Reactome" id="R-RNO-9629569">
    <property type="pathway name" value="Protein hydroxylation"/>
</dbReference>
<dbReference type="Reactome" id="R-RNO-975956">
    <property type="pathway name" value="Nonsense Mediated Decay (NMD) independent of the Exon Junction Complex (EJC)"/>
</dbReference>
<dbReference type="Reactome" id="R-RNO-975957">
    <property type="pathway name" value="Nonsense Mediated Decay (NMD) enhanced by the Exon Junction Complex (EJC)"/>
</dbReference>
<dbReference type="PRO" id="PR:P18445"/>
<dbReference type="Proteomes" id="UP000002494">
    <property type="component" value="Chromosome 1"/>
</dbReference>
<dbReference type="Bgee" id="ENSRNOG00000014214">
    <property type="expression patterns" value="Expressed in spleen and 19 other cell types or tissues"/>
</dbReference>
<dbReference type="GO" id="GO:0005737">
    <property type="term" value="C:cytoplasm"/>
    <property type="evidence" value="ECO:0000266"/>
    <property type="project" value="RGD"/>
</dbReference>
<dbReference type="GO" id="GO:0022625">
    <property type="term" value="C:cytosolic large ribosomal subunit"/>
    <property type="evidence" value="ECO:0000314"/>
    <property type="project" value="RGD"/>
</dbReference>
<dbReference type="GO" id="GO:0022626">
    <property type="term" value="C:cytosolic ribosome"/>
    <property type="evidence" value="ECO:0000266"/>
    <property type="project" value="RGD"/>
</dbReference>
<dbReference type="GO" id="GO:0045202">
    <property type="term" value="C:synapse"/>
    <property type="evidence" value="ECO:0000266"/>
    <property type="project" value="RGD"/>
</dbReference>
<dbReference type="GO" id="GO:0003735">
    <property type="term" value="F:structural constituent of ribosome"/>
    <property type="evidence" value="ECO:0000266"/>
    <property type="project" value="RGD"/>
</dbReference>
<dbReference type="GO" id="GO:0006412">
    <property type="term" value="P:translation"/>
    <property type="evidence" value="ECO:0000266"/>
    <property type="project" value="RGD"/>
</dbReference>
<dbReference type="FunFam" id="3.100.10.10:FF:000024">
    <property type="entry name" value="RPL27A isoform 10"/>
    <property type="match status" value="1"/>
</dbReference>
<dbReference type="Gene3D" id="3.100.10.10">
    <property type="match status" value="1"/>
</dbReference>
<dbReference type="Gene3D" id="4.10.990.10">
    <property type="match status" value="1"/>
</dbReference>
<dbReference type="HAMAP" id="MF_01341">
    <property type="entry name" value="Ribosomal_uL15"/>
    <property type="match status" value="1"/>
</dbReference>
<dbReference type="InterPro" id="IPR027386">
    <property type="entry name" value="Rbsml_uL15_N"/>
</dbReference>
<dbReference type="InterPro" id="IPR030878">
    <property type="entry name" value="Ribosomal_uL15"/>
</dbReference>
<dbReference type="InterPro" id="IPR021131">
    <property type="entry name" value="Ribosomal_uL15/eL18"/>
</dbReference>
<dbReference type="InterPro" id="IPR036227">
    <property type="entry name" value="Ribosomal_uL15/eL18_sf"/>
</dbReference>
<dbReference type="InterPro" id="IPR001196">
    <property type="entry name" value="Ribosomal_uL15_CS"/>
</dbReference>
<dbReference type="PANTHER" id="PTHR11721">
    <property type="entry name" value="60S RIBOSOMAL PROTEIN L27A"/>
    <property type="match status" value="1"/>
</dbReference>
<dbReference type="PANTHER" id="PTHR11721:SF3">
    <property type="entry name" value="LARGE RIBOSOMAL SUBUNIT PROTEIN UL15"/>
    <property type="match status" value="1"/>
</dbReference>
<dbReference type="Pfam" id="PF00828">
    <property type="entry name" value="Ribosomal_L27A"/>
    <property type="match status" value="1"/>
</dbReference>
<dbReference type="SUPFAM" id="SSF52080">
    <property type="entry name" value="Ribosomal proteins L15p and L18e"/>
    <property type="match status" value="1"/>
</dbReference>
<dbReference type="PROSITE" id="PS00475">
    <property type="entry name" value="RIBOSOMAL_L15"/>
    <property type="match status" value="1"/>
</dbReference>
<comment type="function">
    <text evidence="1">Component of the large ribosomal subunit. The ribosome is a large ribonucleoprotein complex responsible for the synthesis of proteins in the cell.</text>
</comment>
<comment type="subunit">
    <text evidence="1">Component of the large ribosomal subunit.</text>
</comment>
<comment type="subcellular location">
    <subcellularLocation>
        <location evidence="1">Cytoplasm</location>
    </subcellularLocation>
</comment>
<comment type="PTM">
    <text evidence="1">Hydroxylated on His-39 by MINA.</text>
</comment>
<comment type="similarity">
    <text evidence="4">Belongs to the universal ribosomal protein uL15 family.</text>
</comment>
<gene>
    <name type="primary">Rpl27a</name>
</gene>
<organism>
    <name type="scientific">Rattus norvegicus</name>
    <name type="common">Rat</name>
    <dbReference type="NCBI Taxonomy" id="10116"/>
    <lineage>
        <taxon>Eukaryota</taxon>
        <taxon>Metazoa</taxon>
        <taxon>Chordata</taxon>
        <taxon>Craniata</taxon>
        <taxon>Vertebrata</taxon>
        <taxon>Euteleostomi</taxon>
        <taxon>Mammalia</taxon>
        <taxon>Eutheria</taxon>
        <taxon>Euarchontoglires</taxon>
        <taxon>Glires</taxon>
        <taxon>Rodentia</taxon>
        <taxon>Myomorpha</taxon>
        <taxon>Muroidea</taxon>
        <taxon>Muridae</taxon>
        <taxon>Murinae</taxon>
        <taxon>Rattus</taxon>
    </lineage>
</organism>
<accession>P18445</accession>
<keyword id="KW-0002">3D-structure</keyword>
<keyword id="KW-0007">Acetylation</keyword>
<keyword id="KW-0963">Cytoplasm</keyword>
<keyword id="KW-0903">Direct protein sequencing</keyword>
<keyword id="KW-0379">Hydroxylation</keyword>
<keyword id="KW-0597">Phosphoprotein</keyword>
<keyword id="KW-1185">Reference proteome</keyword>
<keyword id="KW-0687">Ribonucleoprotein</keyword>
<keyword id="KW-0689">Ribosomal protein</keyword>
<name>RL27A_RAT</name>